<gene>
    <name evidence="4" type="primary">HP3</name>
</gene>
<proteinExistence type="evidence at transcript level"/>
<protein>
    <recommendedName>
        <fullName evidence="4">Elsinochromes biosynthesis cluster protein HP3</fullName>
    </recommendedName>
</protein>
<accession>B1A0U7</accession>
<organism>
    <name type="scientific">Elsinoe fawcettii</name>
    <name type="common">Citrus scab fungus</name>
    <name type="synonym">Sphaceloma fawcettii</name>
    <dbReference type="NCBI Taxonomy" id="40997"/>
    <lineage>
        <taxon>Eukaryota</taxon>
        <taxon>Fungi</taxon>
        <taxon>Dikarya</taxon>
        <taxon>Ascomycota</taxon>
        <taxon>Pezizomycotina</taxon>
        <taxon>Dothideomycetes</taxon>
        <taxon>Dothideomycetidae</taxon>
        <taxon>Myriangiales</taxon>
        <taxon>Elsinoaceae</taxon>
        <taxon>Elsinoe</taxon>
    </lineage>
</organism>
<feature type="chain" id="PRO_0000445825" description="Elsinochromes biosynthesis cluster protein HP3">
    <location>
        <begin position="1"/>
        <end position="249"/>
    </location>
</feature>
<feature type="transmembrane region" description="Helical" evidence="1">
    <location>
        <begin position="138"/>
        <end position="158"/>
    </location>
</feature>
<feature type="glycosylation site" description="N-linked (GlcNAc...) asparagine" evidence="2">
    <location>
        <position position="106"/>
    </location>
</feature>
<reference key="1">
    <citation type="journal article" date="2008" name="Microbiology">
        <title>Determination of a transcriptional regulator-like gene involved in biosynthesis of elsinochrome phytotoxin by the citrus scab fungus, Elsinoe fawcettii.</title>
        <authorList>
            <person name="Chung K.R."/>
            <person name="Liao H.L."/>
        </authorList>
    </citation>
    <scope>NUCLEOTIDE SEQUENCE [GENOMIC DNA]</scope>
    <scope>IDENTIFICATION</scope>
    <scope>FUNCTION</scope>
    <scope>INDUCTION</scope>
</reference>
<reference key="2">
    <citation type="journal article" date="2011" name="Mol. Plant Pathol.">
        <title>Elsinoe fawcettii and Elsinoe australis: the fungal pathogens causing citrus scab.</title>
        <authorList>
            <person name="Chung K.R."/>
        </authorList>
    </citation>
    <scope>REVIEW</scope>
</reference>
<sequence>MSDSASPIFVEYRNTDLLLSPSSAHVYYLPVSSDKHIMLTASTTMGAVPLTTSTTPLVSSTVHQTVFRLRFDSAVTRLTPVTTTTSVTTGTLPWYIYQTPLVEIINTTRVTIGAPYDCDGFFWGRELRPNPDISGVGVVFAFMLSAWLVWLITVYAFARGQIDASQVTSADTRFFRVQVKSSGWRWSSVFLRAILVFSDQQLVTGIAIMIATFASCQDISVWHYAFAVSLAWVSHQHYCSLKTQHCVLD</sequence>
<comment type="function">
    <text evidence="3 5">Part of the gene cluster that mediates the biosynthesis of elsinochromes, pigments consisting of at least four interconvertible tautomers (A, B, C and D) that have a core phenolic quinone to which various side chains are attached and which play an important role in fungal pathogenesis (PubMed:18957608). The non-reducing polyketide synthase PKS1 was proposed to iteratively catalyze decarboxylation between acetyl-CoA and malonyl-CoA subunits for polyketide chain elongation. The released polyketide undergoes cyclization to form an aromatic ring, and proceeds via serial modification steps to produce the heptaketide back- bone of elsinochrome. As elsinochrome has a symmetrical structure, two identical heptaketides are fused to form a core 1,2-dihydrobenzo-perylene ring structure, which can then be successively modified to produce the various derivatives of elsinochrome. Some of these reactions may be cooperatively carried out, at least in part, by the products of RDT1, OXR1 and PKS1. PRF1, embedded within the elsinochrome cluster possibly functions to stabilize some of the biosynthetic enzymes required for elsinochrome production. As prefoldin is a hexamer containing 2 a and 4 b subunits, additional prefoldin subunits, whose coding genes may not immediately link to the elsinochrome biosynthetic gene cluster, are required to fulfill the chaperone function. In addition, no methyltransferase-coding gene exists within the biosynthetic gene cluster, even though elsinochrome has four methyl groups at positions C3, C7, C8 and C12. Apparently, the identified gene cluster does not contain the entire entourage of genes responsible for elsinochrome biosynthesis. Once elsinochrome is synthesized, it must be exported outside the fungal cells, which is probably accomplished by the ECT1 transporter, to avoid toxicity (PubMed:21199563).</text>
</comment>
<comment type="subcellular location">
    <subcellularLocation>
        <location evidence="1">Membrane</location>
        <topology evidence="1">Single-pass membrane protein</topology>
    </subcellularLocation>
</comment>
<comment type="induction">
    <text evidence="3">Expression is not affected in the presence of large amounts of glucose, during nitrogen starvation or at alkaline pH, conditions highly conducive to elsinochrome accumulation.</text>
</comment>
<dbReference type="EMBL" id="EU414201">
    <property type="protein sequence ID" value="ABZ82011.1"/>
    <property type="molecule type" value="Genomic_DNA"/>
</dbReference>
<dbReference type="GlyCosmos" id="B1A0U7">
    <property type="glycosylation" value="1 site, No reported glycans"/>
</dbReference>
<dbReference type="GO" id="GO:0016020">
    <property type="term" value="C:membrane"/>
    <property type="evidence" value="ECO:0007669"/>
    <property type="project" value="UniProtKB-SubCell"/>
</dbReference>
<dbReference type="InterPro" id="IPR053018">
    <property type="entry name" value="Elsinochrome_Biosynth-Asso"/>
</dbReference>
<dbReference type="PANTHER" id="PTHR37577">
    <property type="entry name" value="INTEGRAL MEMBRANE PROTEIN"/>
    <property type="match status" value="1"/>
</dbReference>
<dbReference type="PANTHER" id="PTHR37577:SF1">
    <property type="entry name" value="INTEGRAL MEMBRANE PROTEIN"/>
    <property type="match status" value="1"/>
</dbReference>
<name>HP3_ELSFA</name>
<keyword id="KW-0325">Glycoprotein</keyword>
<keyword id="KW-0472">Membrane</keyword>
<keyword id="KW-0812">Transmembrane</keyword>
<keyword id="KW-1133">Transmembrane helix</keyword>
<evidence type="ECO:0000255" key="1"/>
<evidence type="ECO:0000255" key="2">
    <source>
        <dbReference type="PROSITE-ProRule" id="PRU00498"/>
    </source>
</evidence>
<evidence type="ECO:0000269" key="3">
    <source>
    </source>
</evidence>
<evidence type="ECO:0000303" key="4">
    <source>
    </source>
</evidence>
<evidence type="ECO:0000303" key="5">
    <source>
    </source>
</evidence>